<dbReference type="EMBL" id="CP000750">
    <property type="protein sequence ID" value="ABS04657.1"/>
    <property type="molecule type" value="Genomic_DNA"/>
</dbReference>
<dbReference type="RefSeq" id="WP_012087090.1">
    <property type="nucleotide sequence ID" value="NC_009664.2"/>
</dbReference>
<dbReference type="SMR" id="A6WCW8"/>
<dbReference type="STRING" id="266940.Krad_3193"/>
<dbReference type="KEGG" id="kra:Krad_3193"/>
<dbReference type="eggNOG" id="COG1799">
    <property type="taxonomic scope" value="Bacteria"/>
</dbReference>
<dbReference type="HOGENOM" id="CLU_078499_0_0_11"/>
<dbReference type="OrthoDB" id="3731101at2"/>
<dbReference type="Proteomes" id="UP000001116">
    <property type="component" value="Chromosome"/>
</dbReference>
<dbReference type="GO" id="GO:0005737">
    <property type="term" value="C:cytoplasm"/>
    <property type="evidence" value="ECO:0007669"/>
    <property type="project" value="UniProtKB-SubCell"/>
</dbReference>
<dbReference type="GO" id="GO:0000917">
    <property type="term" value="P:division septum assembly"/>
    <property type="evidence" value="ECO:0007669"/>
    <property type="project" value="UniProtKB-KW"/>
</dbReference>
<dbReference type="GO" id="GO:0043093">
    <property type="term" value="P:FtsZ-dependent cytokinesis"/>
    <property type="evidence" value="ECO:0007669"/>
    <property type="project" value="UniProtKB-UniRule"/>
</dbReference>
<dbReference type="Gene3D" id="3.30.110.150">
    <property type="entry name" value="SepF-like protein"/>
    <property type="match status" value="1"/>
</dbReference>
<dbReference type="HAMAP" id="MF_01197">
    <property type="entry name" value="SepF"/>
    <property type="match status" value="1"/>
</dbReference>
<dbReference type="InterPro" id="IPR023052">
    <property type="entry name" value="Cell_div_SepF"/>
</dbReference>
<dbReference type="InterPro" id="IPR007561">
    <property type="entry name" value="Cell_div_SepF/SepF-rel"/>
</dbReference>
<dbReference type="InterPro" id="IPR038594">
    <property type="entry name" value="SepF-like_sf"/>
</dbReference>
<dbReference type="PANTHER" id="PTHR35798">
    <property type="entry name" value="CELL DIVISION PROTEIN SEPF"/>
    <property type="match status" value="1"/>
</dbReference>
<dbReference type="PANTHER" id="PTHR35798:SF1">
    <property type="entry name" value="CELL DIVISION PROTEIN SEPF"/>
    <property type="match status" value="1"/>
</dbReference>
<dbReference type="Pfam" id="PF04472">
    <property type="entry name" value="SepF"/>
    <property type="match status" value="1"/>
</dbReference>
<gene>
    <name evidence="1" type="primary">sepF</name>
    <name type="ordered locus">Krad_3193</name>
</gene>
<protein>
    <recommendedName>
        <fullName evidence="1">Cell division protein SepF</fullName>
    </recommendedName>
</protein>
<keyword id="KW-0131">Cell cycle</keyword>
<keyword id="KW-0132">Cell division</keyword>
<keyword id="KW-0963">Cytoplasm</keyword>
<keyword id="KW-1185">Reference proteome</keyword>
<keyword id="KW-0717">Septation</keyword>
<comment type="function">
    <text evidence="1">Cell division protein that is part of the divisome complex and is recruited early to the Z-ring. Probably stimulates Z-ring formation, perhaps through the cross-linking of FtsZ protofilaments. Its function overlaps with FtsA.</text>
</comment>
<comment type="subunit">
    <text evidence="1">Homodimer. Interacts with FtsZ.</text>
</comment>
<comment type="subcellular location">
    <subcellularLocation>
        <location evidence="1">Cytoplasm</location>
    </subcellularLocation>
    <text evidence="1">Localizes to the division site, in a FtsZ-dependent manner.</text>
</comment>
<comment type="similarity">
    <text evidence="1">Belongs to the SepF family.</text>
</comment>
<reference key="1">
    <citation type="journal article" date="2008" name="PLoS ONE">
        <title>Survival in nuclear waste, extreme resistance, and potential applications gleaned from the genome sequence of Kineococcus radiotolerans SRS30216.</title>
        <authorList>
            <person name="Bagwell C.E."/>
            <person name="Bhat S."/>
            <person name="Hawkins G.M."/>
            <person name="Smith B.W."/>
            <person name="Biswas T."/>
            <person name="Hoover T.R."/>
            <person name="Saunders E."/>
            <person name="Han C.S."/>
            <person name="Tsodikov O.V."/>
            <person name="Shimkets L.J."/>
        </authorList>
    </citation>
    <scope>NUCLEOTIDE SEQUENCE [LARGE SCALE GENOMIC DNA]</scope>
    <source>
        <strain>ATCC BAA-149 / DSM 14245 / SRS30216</strain>
    </source>
</reference>
<feature type="chain" id="PRO_0000334014" description="Cell division protein SepF">
    <location>
        <begin position="1"/>
        <end position="187"/>
    </location>
</feature>
<feature type="region of interest" description="Disordered" evidence="2">
    <location>
        <begin position="13"/>
        <end position="74"/>
    </location>
</feature>
<feature type="compositionally biased region" description="Basic and acidic residues" evidence="2">
    <location>
        <begin position="16"/>
        <end position="65"/>
    </location>
</feature>
<organism>
    <name type="scientific">Kineococcus radiotolerans (strain ATCC BAA-149 / DSM 14245 / SRS30216)</name>
    <dbReference type="NCBI Taxonomy" id="266940"/>
    <lineage>
        <taxon>Bacteria</taxon>
        <taxon>Bacillati</taxon>
        <taxon>Actinomycetota</taxon>
        <taxon>Actinomycetes</taxon>
        <taxon>Kineosporiales</taxon>
        <taxon>Kineosporiaceae</taxon>
        <taxon>Kineococcus</taxon>
    </lineage>
</organism>
<name>SEPF_KINRD</name>
<evidence type="ECO:0000255" key="1">
    <source>
        <dbReference type="HAMAP-Rule" id="MF_01197"/>
    </source>
</evidence>
<evidence type="ECO:0000256" key="2">
    <source>
        <dbReference type="SAM" id="MobiDB-lite"/>
    </source>
</evidence>
<proteinExistence type="inferred from homology"/>
<sequence length="187" mass="20957">MAGALRNAMVYLGLAEDDRYAEDTEPETTRPRVEAAREVRVESRHEARPEVRHEPRPEVSVERRPAPATTAQVTPIRKQVAHVVPQTSTTSSSPELHRITTIHPRTYNEAKTIGESFREGVPVIMNLTDMDDSDAKRLVDFSAGLVFGLHGAIERVTNKVFLLSPANVEVASQEEERPTERTFFNQS</sequence>
<accession>A6WCW8</accession>